<reference key="1">
    <citation type="submission" date="2007-08" db="EMBL/GenBank/DDBJ databases">
        <authorList>
            <consortium name="The Citrobacter koseri Genome Sequencing Project"/>
            <person name="McClelland M."/>
            <person name="Sanderson E.K."/>
            <person name="Porwollik S."/>
            <person name="Spieth J."/>
            <person name="Clifton W.S."/>
            <person name="Latreille P."/>
            <person name="Courtney L."/>
            <person name="Wang C."/>
            <person name="Pepin K."/>
            <person name="Bhonagiri V."/>
            <person name="Nash W."/>
            <person name="Johnson M."/>
            <person name="Thiruvilangam P."/>
            <person name="Wilson R."/>
        </authorList>
    </citation>
    <scope>NUCLEOTIDE SEQUENCE [LARGE SCALE GENOMIC DNA]</scope>
    <source>
        <strain>ATCC BAA-895 / CDC 4225-83 / SGSC4696</strain>
    </source>
</reference>
<name>RL18_CITK8</name>
<protein>
    <recommendedName>
        <fullName evidence="1">Large ribosomal subunit protein uL18</fullName>
    </recommendedName>
    <alternativeName>
        <fullName evidence="2">50S ribosomal protein L18</fullName>
    </alternativeName>
</protein>
<sequence length="117" mass="12770">MDKKSARIRRATRARRKLQELGATRLVVHRTPRHIYAQVIAPNGSEVLVAASTVEKAIAEQLKYTGNKDAAAAVGKAVAERALEKGIKDVSFDRSGFQYHGRVQALADAAREAGLQF</sequence>
<accession>A8AQJ9</accession>
<organism>
    <name type="scientific">Citrobacter koseri (strain ATCC BAA-895 / CDC 4225-83 / SGSC4696)</name>
    <dbReference type="NCBI Taxonomy" id="290338"/>
    <lineage>
        <taxon>Bacteria</taxon>
        <taxon>Pseudomonadati</taxon>
        <taxon>Pseudomonadota</taxon>
        <taxon>Gammaproteobacteria</taxon>
        <taxon>Enterobacterales</taxon>
        <taxon>Enterobacteriaceae</taxon>
        <taxon>Citrobacter</taxon>
    </lineage>
</organism>
<keyword id="KW-1185">Reference proteome</keyword>
<keyword id="KW-0687">Ribonucleoprotein</keyword>
<keyword id="KW-0689">Ribosomal protein</keyword>
<keyword id="KW-0694">RNA-binding</keyword>
<keyword id="KW-0699">rRNA-binding</keyword>
<feature type="chain" id="PRO_1000053011" description="Large ribosomal subunit protein uL18">
    <location>
        <begin position="1"/>
        <end position="117"/>
    </location>
</feature>
<proteinExistence type="inferred from homology"/>
<evidence type="ECO:0000255" key="1">
    <source>
        <dbReference type="HAMAP-Rule" id="MF_01337"/>
    </source>
</evidence>
<evidence type="ECO:0000305" key="2"/>
<comment type="function">
    <text evidence="1">This is one of the proteins that bind and probably mediate the attachment of the 5S RNA into the large ribosomal subunit, where it forms part of the central protuberance.</text>
</comment>
<comment type="subunit">
    <text evidence="1">Part of the 50S ribosomal subunit; part of the 5S rRNA/L5/L18/L25 subcomplex. Contacts the 5S and 23S rRNAs.</text>
</comment>
<comment type="similarity">
    <text evidence="1">Belongs to the universal ribosomal protein uL18 family.</text>
</comment>
<gene>
    <name evidence="1" type="primary">rplR</name>
    <name type="ordered locus">CKO_04717</name>
</gene>
<dbReference type="EMBL" id="CP000822">
    <property type="protein sequence ID" value="ABV15762.1"/>
    <property type="molecule type" value="Genomic_DNA"/>
</dbReference>
<dbReference type="RefSeq" id="WP_000358960.1">
    <property type="nucleotide sequence ID" value="NC_009792.1"/>
</dbReference>
<dbReference type="SMR" id="A8AQJ9"/>
<dbReference type="STRING" id="290338.CKO_04717"/>
<dbReference type="GeneID" id="98390426"/>
<dbReference type="KEGG" id="cko:CKO_04717"/>
<dbReference type="HOGENOM" id="CLU_098841_0_1_6"/>
<dbReference type="OrthoDB" id="9810939at2"/>
<dbReference type="Proteomes" id="UP000008148">
    <property type="component" value="Chromosome"/>
</dbReference>
<dbReference type="GO" id="GO:0022625">
    <property type="term" value="C:cytosolic large ribosomal subunit"/>
    <property type="evidence" value="ECO:0007669"/>
    <property type="project" value="TreeGrafter"/>
</dbReference>
<dbReference type="GO" id="GO:0008097">
    <property type="term" value="F:5S rRNA binding"/>
    <property type="evidence" value="ECO:0007669"/>
    <property type="project" value="TreeGrafter"/>
</dbReference>
<dbReference type="GO" id="GO:0003735">
    <property type="term" value="F:structural constituent of ribosome"/>
    <property type="evidence" value="ECO:0007669"/>
    <property type="project" value="InterPro"/>
</dbReference>
<dbReference type="GO" id="GO:0006412">
    <property type="term" value="P:translation"/>
    <property type="evidence" value="ECO:0007669"/>
    <property type="project" value="UniProtKB-UniRule"/>
</dbReference>
<dbReference type="CDD" id="cd00432">
    <property type="entry name" value="Ribosomal_L18_L5e"/>
    <property type="match status" value="1"/>
</dbReference>
<dbReference type="FunFam" id="3.30.420.100:FF:000001">
    <property type="entry name" value="50S ribosomal protein L18"/>
    <property type="match status" value="1"/>
</dbReference>
<dbReference type="Gene3D" id="3.30.420.100">
    <property type="match status" value="1"/>
</dbReference>
<dbReference type="HAMAP" id="MF_01337_B">
    <property type="entry name" value="Ribosomal_uL18_B"/>
    <property type="match status" value="1"/>
</dbReference>
<dbReference type="InterPro" id="IPR004389">
    <property type="entry name" value="Ribosomal_uL18_bac-type"/>
</dbReference>
<dbReference type="InterPro" id="IPR005484">
    <property type="entry name" value="Ribosomal_uL18_bac/euk"/>
</dbReference>
<dbReference type="NCBIfam" id="TIGR00060">
    <property type="entry name" value="L18_bact"/>
    <property type="match status" value="1"/>
</dbReference>
<dbReference type="PANTHER" id="PTHR12899">
    <property type="entry name" value="39S RIBOSOMAL PROTEIN L18, MITOCHONDRIAL"/>
    <property type="match status" value="1"/>
</dbReference>
<dbReference type="PANTHER" id="PTHR12899:SF3">
    <property type="entry name" value="LARGE RIBOSOMAL SUBUNIT PROTEIN UL18M"/>
    <property type="match status" value="1"/>
</dbReference>
<dbReference type="Pfam" id="PF00861">
    <property type="entry name" value="Ribosomal_L18p"/>
    <property type="match status" value="1"/>
</dbReference>
<dbReference type="SUPFAM" id="SSF53137">
    <property type="entry name" value="Translational machinery components"/>
    <property type="match status" value="1"/>
</dbReference>